<feature type="signal peptide" evidence="2">
    <location>
        <begin position="1"/>
        <end position="13"/>
    </location>
</feature>
<feature type="chain" id="PRO_0000322659" description="Dictomallein-like protein">
    <location>
        <begin position="14"/>
        <end position="645"/>
    </location>
</feature>
<feature type="domain" description="Peptidase M66">
    <location>
        <begin position="177"/>
        <end position="448"/>
    </location>
</feature>
<feature type="region of interest" description="Disordered" evidence="3">
    <location>
        <begin position="19"/>
        <end position="55"/>
    </location>
</feature>
<feature type="active site" evidence="1">
    <location>
        <position position="334"/>
    </location>
</feature>
<feature type="binding site" evidence="1">
    <location>
        <position position="333"/>
    </location>
    <ligand>
        <name>Zn(2+)</name>
        <dbReference type="ChEBI" id="CHEBI:29105"/>
        <note>catalytic</note>
    </ligand>
</feature>
<feature type="binding site" evidence="1">
    <location>
        <position position="337"/>
    </location>
    <ligand>
        <name>Zn(2+)</name>
        <dbReference type="ChEBI" id="CHEBI:29105"/>
        <note>catalytic</note>
    </ligand>
</feature>
<feature type="binding site" evidence="1">
    <location>
        <position position="343"/>
    </location>
    <ligand>
        <name>Zn(2+)</name>
        <dbReference type="ChEBI" id="CHEBI:29105"/>
        <note>catalytic</note>
    </ligand>
</feature>
<keyword id="KW-0378">Hydrolase</keyword>
<keyword id="KW-0479">Metal-binding</keyword>
<keyword id="KW-0482">Metalloprotease</keyword>
<keyword id="KW-0645">Protease</keyword>
<keyword id="KW-1185">Reference proteome</keyword>
<keyword id="KW-0964">Secreted</keyword>
<keyword id="KW-0732">Signal</keyword>
<keyword id="KW-0862">Zinc</keyword>
<sequence>MKLSMVMVLLVLAGQLSGCGGNDDNNSERTHESGDSNGDVTTPDNDASSNDEDDAALEPTQLRSVEFAQSHVLPPGGLSWDLKESGELQLVEKRDTLVLATFDEAVQAAEVRVYDKNHQLLSSLNLSKPSDLPPTEGDDLPYSDDAWSAVIPSDDMSKGVNIRVVAQGKSASEIVTPALHPELDLTIQSLPFLIYGANESNIPFKIDDLKVMFADPDTAGQGFAGMPFSKTHIVNHPLGVFESDYLIAPPSGSAPAKKVESAADPDYSKPILDMVWHIEYATGDMALNKITFAPSMLIDHSKAGPIKTRGFGGMAYTGSGASMGYPSLGLLWHEGGHALGLPHSLSGSKDLRGPYYPYAEGSLSGSAWGYDQHKGYFRSPLTAPTSRYFVCNGERGGGVFQKTPEGRCYRFDPMHSADEQKDPDAAFPLFSDFNAGKMQRWVRNRARMNPSNDGFQVLDDNGDWADFVPETKHYAGWHIKEHYPVSFDKTTDFIMITYSLAGTDAASHFYNPIRYKGNAIEYVDAINQDGLNSINADISSGARAKYSDYCRRQGCDFTLKVTYEDGSTSYRVLKGSARKDWQPSVWKDDYLNENSKDSYLFWAVALVAPDGAPKVKKLELLDTPILWNLSPTAVMGAEALVVKQL</sequence>
<evidence type="ECO:0000250" key="1"/>
<evidence type="ECO:0000255" key="2"/>
<evidence type="ECO:0000256" key="3">
    <source>
        <dbReference type="SAM" id="MobiDB-lite"/>
    </source>
</evidence>
<evidence type="ECO:0000305" key="4"/>
<organism>
    <name type="scientific">Hahella chejuensis (strain KCTC 2396)</name>
    <dbReference type="NCBI Taxonomy" id="349521"/>
    <lineage>
        <taxon>Bacteria</taxon>
        <taxon>Pseudomonadati</taxon>
        <taxon>Pseudomonadota</taxon>
        <taxon>Gammaproteobacteria</taxon>
        <taxon>Oceanospirillales</taxon>
        <taxon>Hahellaceae</taxon>
        <taxon>Hahella</taxon>
    </lineage>
</organism>
<proteinExistence type="inferred from homology"/>
<name>DTMLH_HAHCH</name>
<gene>
    <name type="primary">dtmL</name>
    <name type="ordered locus">HCH_03744</name>
</gene>
<dbReference type="EC" id="3.4.24.-"/>
<dbReference type="EMBL" id="CP000155">
    <property type="protein sequence ID" value="ABC30478.1"/>
    <property type="molecule type" value="Genomic_DNA"/>
</dbReference>
<dbReference type="RefSeq" id="WP_011397546.1">
    <property type="nucleotide sequence ID" value="NC_007645.1"/>
</dbReference>
<dbReference type="KEGG" id="hch:HCH_03744"/>
<dbReference type="eggNOG" id="ENOG502Z8SD">
    <property type="taxonomic scope" value="Bacteria"/>
</dbReference>
<dbReference type="HOGENOM" id="CLU_451780_0_0_6"/>
<dbReference type="OrthoDB" id="6229465at2"/>
<dbReference type="Proteomes" id="UP000000238">
    <property type="component" value="Chromosome"/>
</dbReference>
<dbReference type="GO" id="GO:0005576">
    <property type="term" value="C:extracellular region"/>
    <property type="evidence" value="ECO:0007669"/>
    <property type="project" value="UniProtKB-SubCell"/>
</dbReference>
<dbReference type="GO" id="GO:0046872">
    <property type="term" value="F:metal ion binding"/>
    <property type="evidence" value="ECO:0007669"/>
    <property type="project" value="UniProtKB-KW"/>
</dbReference>
<dbReference type="GO" id="GO:0004222">
    <property type="term" value="F:metalloendopeptidase activity"/>
    <property type="evidence" value="ECO:0007669"/>
    <property type="project" value="InterPro"/>
</dbReference>
<dbReference type="GO" id="GO:0006508">
    <property type="term" value="P:proteolysis"/>
    <property type="evidence" value="ECO:0007669"/>
    <property type="project" value="UniProtKB-KW"/>
</dbReference>
<dbReference type="InterPro" id="IPR051256">
    <property type="entry name" value="Dictomallein"/>
</dbReference>
<dbReference type="InterPro" id="IPR019503">
    <property type="entry name" value="Peptidase_M66_dom"/>
</dbReference>
<dbReference type="PANTHER" id="PTHR39540">
    <property type="match status" value="1"/>
</dbReference>
<dbReference type="PANTHER" id="PTHR39540:SF1">
    <property type="entry name" value="DICTOMALLEIN-1-RELATED"/>
    <property type="match status" value="1"/>
</dbReference>
<dbReference type="Pfam" id="PF10462">
    <property type="entry name" value="Peptidase_M66"/>
    <property type="match status" value="1"/>
</dbReference>
<dbReference type="SUPFAM" id="SSF55486">
    <property type="entry name" value="Metalloproteases ('zincins'), catalytic domain"/>
    <property type="match status" value="1"/>
</dbReference>
<dbReference type="PROSITE" id="PS51694">
    <property type="entry name" value="PEPTIDASE_M66"/>
    <property type="match status" value="1"/>
</dbReference>
<protein>
    <recommendedName>
        <fullName>Dictomallein-like protein</fullName>
        <ecNumber>3.4.24.-</ecNumber>
    </recommendedName>
</protein>
<comment type="cofactor">
    <cofactor evidence="4">
        <name>Zn(2+)</name>
        <dbReference type="ChEBI" id="CHEBI:29105"/>
    </cofactor>
    <text evidence="4">Binds 1 zinc ion per subunit.</text>
</comment>
<comment type="subcellular location">
    <subcellularLocation>
        <location evidence="4">Secreted</location>
    </subcellularLocation>
</comment>
<comment type="similarity">
    <text evidence="4">Belongs to the dictomallein family.</text>
</comment>
<accession>Q2SFU6</accession>
<reference key="1">
    <citation type="journal article" date="2005" name="Nucleic Acids Res.">
        <title>Genomic blueprint of Hahella chejuensis, a marine microbe producing an algicidal agent.</title>
        <authorList>
            <person name="Jeong H."/>
            <person name="Yim J.H."/>
            <person name="Lee C."/>
            <person name="Choi S.-H."/>
            <person name="Park Y.K."/>
            <person name="Yoon S.H."/>
            <person name="Hur C.-G."/>
            <person name="Kang H.-Y."/>
            <person name="Kim D."/>
            <person name="Lee H.H."/>
            <person name="Park K.H."/>
            <person name="Park S.-H."/>
            <person name="Park H.-S."/>
            <person name="Lee H.K."/>
            <person name="Oh T.K."/>
            <person name="Kim J.F."/>
        </authorList>
    </citation>
    <scope>NUCLEOTIDE SEQUENCE [LARGE SCALE GENOMIC DNA]</scope>
    <source>
        <strain>KCTC 2396</strain>
    </source>
</reference>